<proteinExistence type="inferred from homology"/>
<sequence>MARGKDARVTVILECTNCVRGGVTKESTGISRYITEKNRHNTPGQLELKKFCPYCYKQTIHGEIKK</sequence>
<dbReference type="EMBL" id="EU262890">
    <property type="protein sequence ID" value="ABX10058.1"/>
    <property type="molecule type" value="Genomic_DNA"/>
</dbReference>
<dbReference type="RefSeq" id="YP_001687304.1">
    <property type="nucleotide sequence ID" value="NC_010360.2"/>
</dbReference>
<dbReference type="GeneID" id="5955341"/>
<dbReference type="GO" id="GO:0009507">
    <property type="term" value="C:chloroplast"/>
    <property type="evidence" value="ECO:0007669"/>
    <property type="project" value="UniProtKB-SubCell"/>
</dbReference>
<dbReference type="GO" id="GO:1990904">
    <property type="term" value="C:ribonucleoprotein complex"/>
    <property type="evidence" value="ECO:0007669"/>
    <property type="project" value="UniProtKB-KW"/>
</dbReference>
<dbReference type="GO" id="GO:0005840">
    <property type="term" value="C:ribosome"/>
    <property type="evidence" value="ECO:0007669"/>
    <property type="project" value="UniProtKB-KW"/>
</dbReference>
<dbReference type="GO" id="GO:0003735">
    <property type="term" value="F:structural constituent of ribosome"/>
    <property type="evidence" value="ECO:0007669"/>
    <property type="project" value="InterPro"/>
</dbReference>
<dbReference type="GO" id="GO:0006412">
    <property type="term" value="P:translation"/>
    <property type="evidence" value="ECO:0007669"/>
    <property type="project" value="UniProtKB-UniRule"/>
</dbReference>
<dbReference type="Gene3D" id="2.20.28.120">
    <property type="entry name" value="Ribosomal protein L33"/>
    <property type="match status" value="1"/>
</dbReference>
<dbReference type="HAMAP" id="MF_00294">
    <property type="entry name" value="Ribosomal_bL33"/>
    <property type="match status" value="1"/>
</dbReference>
<dbReference type="InterPro" id="IPR001705">
    <property type="entry name" value="Ribosomal_bL33"/>
</dbReference>
<dbReference type="InterPro" id="IPR018264">
    <property type="entry name" value="Ribosomal_bL33_CS"/>
</dbReference>
<dbReference type="InterPro" id="IPR038584">
    <property type="entry name" value="Ribosomal_bL33_sf"/>
</dbReference>
<dbReference type="InterPro" id="IPR011332">
    <property type="entry name" value="Ribosomal_zn-bd"/>
</dbReference>
<dbReference type="NCBIfam" id="NF001764">
    <property type="entry name" value="PRK00504.1"/>
    <property type="match status" value="1"/>
</dbReference>
<dbReference type="NCBIfam" id="NF001860">
    <property type="entry name" value="PRK00595.1"/>
    <property type="match status" value="1"/>
</dbReference>
<dbReference type="NCBIfam" id="TIGR01023">
    <property type="entry name" value="rpmG_bact"/>
    <property type="match status" value="1"/>
</dbReference>
<dbReference type="PANTHER" id="PTHR43168">
    <property type="entry name" value="50S RIBOSOMAL PROTEIN L33, CHLOROPLASTIC"/>
    <property type="match status" value="1"/>
</dbReference>
<dbReference type="PANTHER" id="PTHR43168:SF2">
    <property type="entry name" value="LARGE RIBOSOMAL SUBUNIT PROTEIN BL33C"/>
    <property type="match status" value="1"/>
</dbReference>
<dbReference type="Pfam" id="PF00471">
    <property type="entry name" value="Ribosomal_L33"/>
    <property type="match status" value="1"/>
</dbReference>
<dbReference type="SUPFAM" id="SSF57829">
    <property type="entry name" value="Zn-binding ribosomal proteins"/>
    <property type="match status" value="1"/>
</dbReference>
<dbReference type="PROSITE" id="PS00582">
    <property type="entry name" value="RIBOSOMAL_L33"/>
    <property type="match status" value="1"/>
</dbReference>
<comment type="subcellular location">
    <subcellularLocation>
        <location>Plastid</location>
        <location>Chloroplast</location>
    </subcellularLocation>
</comment>
<comment type="similarity">
    <text evidence="1">Belongs to the bacterial ribosomal protein bL33 family.</text>
</comment>
<reference key="1">
    <citation type="journal article" date="2008" name="Nucleic Acids Res.">
        <title>The complete nucleotide sequences of the five genetically distinct plastid genomes of Oenothera, subsection Oenothera: I. Sequence evaluation and plastome evolution.</title>
        <authorList>
            <person name="Greiner S."/>
            <person name="Wang X."/>
            <person name="Rauwolf U."/>
            <person name="Silber M.V."/>
            <person name="Mayer K."/>
            <person name="Meurer J."/>
            <person name="Haberer G."/>
            <person name="Herrmann R.G."/>
        </authorList>
    </citation>
    <scope>NUCLEOTIDE SEQUENCE [LARGE SCALE GENOMIC DNA]</scope>
    <source>
        <strain>cv. Rr-lamarckiana Sweden</strain>
    </source>
</reference>
<protein>
    <recommendedName>
        <fullName evidence="1">Large ribosomal subunit protein bL33c</fullName>
    </recommendedName>
    <alternativeName>
        <fullName evidence="2">50S ribosomal protein L33, chloroplastic</fullName>
    </alternativeName>
</protein>
<geneLocation type="chloroplast"/>
<gene>
    <name evidence="1" type="primary">rpl33</name>
</gene>
<feature type="chain" id="PRO_0000356818" description="Large ribosomal subunit protein bL33c">
    <location>
        <begin position="1"/>
        <end position="66"/>
    </location>
</feature>
<evidence type="ECO:0000255" key="1">
    <source>
        <dbReference type="HAMAP-Rule" id="MF_00294"/>
    </source>
</evidence>
<evidence type="ECO:0000305" key="2"/>
<name>RK33_OENGL</name>
<accession>B0Z565</accession>
<organism>
    <name type="scientific">Oenothera glazioviana</name>
    <name type="common">Large-flowered evening primrose</name>
    <name type="synonym">Oenothera erythrosepala</name>
    <dbReference type="NCBI Taxonomy" id="482428"/>
    <lineage>
        <taxon>Eukaryota</taxon>
        <taxon>Viridiplantae</taxon>
        <taxon>Streptophyta</taxon>
        <taxon>Embryophyta</taxon>
        <taxon>Tracheophyta</taxon>
        <taxon>Spermatophyta</taxon>
        <taxon>Magnoliopsida</taxon>
        <taxon>eudicotyledons</taxon>
        <taxon>Gunneridae</taxon>
        <taxon>Pentapetalae</taxon>
        <taxon>rosids</taxon>
        <taxon>malvids</taxon>
        <taxon>Myrtales</taxon>
        <taxon>Onagraceae</taxon>
        <taxon>Onagroideae</taxon>
        <taxon>Onagreae</taxon>
        <taxon>Oenothera</taxon>
    </lineage>
</organism>
<keyword id="KW-0150">Chloroplast</keyword>
<keyword id="KW-0934">Plastid</keyword>
<keyword id="KW-0687">Ribonucleoprotein</keyword>
<keyword id="KW-0689">Ribosomal protein</keyword>